<feature type="chain" id="PRO_0000307432" description="Triosephosphate isomerase">
    <location>
        <begin position="1"/>
        <end position="251"/>
    </location>
</feature>
<feature type="active site" description="Electrophile" evidence="1">
    <location>
        <position position="96"/>
    </location>
</feature>
<feature type="active site" description="Proton acceptor" evidence="1">
    <location>
        <position position="167"/>
    </location>
</feature>
<feature type="binding site" evidence="1">
    <location>
        <begin position="9"/>
        <end position="11"/>
    </location>
    <ligand>
        <name>substrate</name>
    </ligand>
</feature>
<feature type="binding site" evidence="1">
    <location>
        <position position="173"/>
    </location>
    <ligand>
        <name>substrate</name>
    </ligand>
</feature>
<feature type="binding site" evidence="1">
    <location>
        <position position="213"/>
    </location>
    <ligand>
        <name>substrate</name>
    </ligand>
</feature>
<feature type="binding site" evidence="1">
    <location>
        <begin position="234"/>
        <end position="235"/>
    </location>
    <ligand>
        <name>substrate</name>
    </ligand>
</feature>
<organism>
    <name type="scientific">Phocaeicola vulgatus (strain ATCC 8482 / DSM 1447 / JCM 5826 / CCUG 4940 / NBRC 14291 / NCTC 11154)</name>
    <name type="common">Bacteroides vulgatus</name>
    <dbReference type="NCBI Taxonomy" id="435590"/>
    <lineage>
        <taxon>Bacteria</taxon>
        <taxon>Pseudomonadati</taxon>
        <taxon>Bacteroidota</taxon>
        <taxon>Bacteroidia</taxon>
        <taxon>Bacteroidales</taxon>
        <taxon>Bacteroidaceae</taxon>
        <taxon>Phocaeicola</taxon>
    </lineage>
</organism>
<proteinExistence type="inferred from homology"/>
<keyword id="KW-0963">Cytoplasm</keyword>
<keyword id="KW-0312">Gluconeogenesis</keyword>
<keyword id="KW-0324">Glycolysis</keyword>
<keyword id="KW-0413">Isomerase</keyword>
<evidence type="ECO:0000255" key="1">
    <source>
        <dbReference type="HAMAP-Rule" id="MF_00147"/>
    </source>
</evidence>
<accession>A6KXL2</accession>
<protein>
    <recommendedName>
        <fullName evidence="1">Triosephosphate isomerase</fullName>
        <shortName evidence="1">TIM</shortName>
        <shortName evidence="1">TPI</shortName>
        <ecNumber evidence="1">5.3.1.1</ecNumber>
    </recommendedName>
    <alternativeName>
        <fullName evidence="1">Triose-phosphate isomerase</fullName>
    </alternativeName>
</protein>
<dbReference type="EC" id="5.3.1.1" evidence="1"/>
<dbReference type="EMBL" id="CP000139">
    <property type="protein sequence ID" value="ABR38176.1"/>
    <property type="molecule type" value="Genomic_DNA"/>
</dbReference>
<dbReference type="RefSeq" id="WP_005840803.1">
    <property type="nucleotide sequence ID" value="NZ_JANSWM010000025.1"/>
</dbReference>
<dbReference type="SMR" id="A6KXL2"/>
<dbReference type="STRING" id="435590.BVU_0466"/>
<dbReference type="PaxDb" id="435590-BVU_0466"/>
<dbReference type="GeneID" id="93510629"/>
<dbReference type="KEGG" id="bvu:BVU_0466"/>
<dbReference type="eggNOG" id="COG0149">
    <property type="taxonomic scope" value="Bacteria"/>
</dbReference>
<dbReference type="HOGENOM" id="CLU_024251_2_3_10"/>
<dbReference type="BioCyc" id="BVUL435590:G1G59-492-MONOMER"/>
<dbReference type="UniPathway" id="UPA00109">
    <property type="reaction ID" value="UER00189"/>
</dbReference>
<dbReference type="UniPathway" id="UPA00138"/>
<dbReference type="Proteomes" id="UP000002861">
    <property type="component" value="Chromosome"/>
</dbReference>
<dbReference type="GO" id="GO:0005829">
    <property type="term" value="C:cytosol"/>
    <property type="evidence" value="ECO:0007669"/>
    <property type="project" value="TreeGrafter"/>
</dbReference>
<dbReference type="GO" id="GO:0004807">
    <property type="term" value="F:triose-phosphate isomerase activity"/>
    <property type="evidence" value="ECO:0007669"/>
    <property type="project" value="UniProtKB-UniRule"/>
</dbReference>
<dbReference type="GO" id="GO:0006094">
    <property type="term" value="P:gluconeogenesis"/>
    <property type="evidence" value="ECO:0007669"/>
    <property type="project" value="UniProtKB-UniRule"/>
</dbReference>
<dbReference type="GO" id="GO:0046166">
    <property type="term" value="P:glyceraldehyde-3-phosphate biosynthetic process"/>
    <property type="evidence" value="ECO:0007669"/>
    <property type="project" value="TreeGrafter"/>
</dbReference>
<dbReference type="GO" id="GO:0019563">
    <property type="term" value="P:glycerol catabolic process"/>
    <property type="evidence" value="ECO:0007669"/>
    <property type="project" value="TreeGrafter"/>
</dbReference>
<dbReference type="GO" id="GO:0006096">
    <property type="term" value="P:glycolytic process"/>
    <property type="evidence" value="ECO:0007669"/>
    <property type="project" value="UniProtKB-UniRule"/>
</dbReference>
<dbReference type="CDD" id="cd00311">
    <property type="entry name" value="TIM"/>
    <property type="match status" value="1"/>
</dbReference>
<dbReference type="FunFam" id="3.20.20.70:FF:000016">
    <property type="entry name" value="Triosephosphate isomerase"/>
    <property type="match status" value="1"/>
</dbReference>
<dbReference type="Gene3D" id="3.20.20.70">
    <property type="entry name" value="Aldolase class I"/>
    <property type="match status" value="1"/>
</dbReference>
<dbReference type="HAMAP" id="MF_00147_B">
    <property type="entry name" value="TIM_B"/>
    <property type="match status" value="1"/>
</dbReference>
<dbReference type="InterPro" id="IPR013785">
    <property type="entry name" value="Aldolase_TIM"/>
</dbReference>
<dbReference type="InterPro" id="IPR035990">
    <property type="entry name" value="TIM_sf"/>
</dbReference>
<dbReference type="InterPro" id="IPR022896">
    <property type="entry name" value="TrioseP_Isoase_bac/euk"/>
</dbReference>
<dbReference type="InterPro" id="IPR000652">
    <property type="entry name" value="Triosephosphate_isomerase"/>
</dbReference>
<dbReference type="InterPro" id="IPR020861">
    <property type="entry name" value="Triosephosphate_isomerase_AS"/>
</dbReference>
<dbReference type="NCBIfam" id="TIGR00419">
    <property type="entry name" value="tim"/>
    <property type="match status" value="1"/>
</dbReference>
<dbReference type="PANTHER" id="PTHR21139">
    <property type="entry name" value="TRIOSEPHOSPHATE ISOMERASE"/>
    <property type="match status" value="1"/>
</dbReference>
<dbReference type="PANTHER" id="PTHR21139:SF42">
    <property type="entry name" value="TRIOSEPHOSPHATE ISOMERASE"/>
    <property type="match status" value="1"/>
</dbReference>
<dbReference type="Pfam" id="PF00121">
    <property type="entry name" value="TIM"/>
    <property type="match status" value="1"/>
</dbReference>
<dbReference type="SUPFAM" id="SSF51351">
    <property type="entry name" value="Triosephosphate isomerase (TIM)"/>
    <property type="match status" value="1"/>
</dbReference>
<dbReference type="PROSITE" id="PS00171">
    <property type="entry name" value="TIM_1"/>
    <property type="match status" value="1"/>
</dbReference>
<dbReference type="PROSITE" id="PS51440">
    <property type="entry name" value="TIM_2"/>
    <property type="match status" value="1"/>
</dbReference>
<sequence length="251" mass="26874">MRKNIVAGNWKMNKNLQEGIALAKELNEALAADKPNCDVVICTPFIHLASVTPIVDKAVIGVGAENCADKVSGAYTGEVSAEMVASTGAEYVILGHSERRAYYHETVEILEEKVKLALANNLKPIFCIGEVLEEREANKQNEVVAAQLASVFSLSAEDFSKIILAYEPVWAIGTGKTATAEQAQEIHAFIRSLIADKYGKEVADNTSILYGGSCKPSNAKELFANPDVDGGLIGGAALKVVDFKGIIDAFK</sequence>
<gene>
    <name evidence="1" type="primary">tpiA</name>
    <name type="ordered locus">BVU_0466</name>
</gene>
<reference key="1">
    <citation type="journal article" date="2007" name="PLoS Biol.">
        <title>Evolution of symbiotic bacteria in the distal human intestine.</title>
        <authorList>
            <person name="Xu J."/>
            <person name="Mahowald M.A."/>
            <person name="Ley R.E."/>
            <person name="Lozupone C.A."/>
            <person name="Hamady M."/>
            <person name="Martens E.C."/>
            <person name="Henrissat B."/>
            <person name="Coutinho P.M."/>
            <person name="Minx P."/>
            <person name="Latreille P."/>
            <person name="Cordum H."/>
            <person name="Van Brunt A."/>
            <person name="Kim K."/>
            <person name="Fulton R.S."/>
            <person name="Fulton L.A."/>
            <person name="Clifton S.W."/>
            <person name="Wilson R.K."/>
            <person name="Knight R.D."/>
            <person name="Gordon J.I."/>
        </authorList>
    </citation>
    <scope>NUCLEOTIDE SEQUENCE [LARGE SCALE GENOMIC DNA]</scope>
    <source>
        <strain>ATCC 8482 / DSM 1447 / JCM 5826 / CCUG 4940 / NBRC 14291 / NCTC 11154</strain>
    </source>
</reference>
<comment type="function">
    <text evidence="1">Involved in the gluconeogenesis. Catalyzes stereospecifically the conversion of dihydroxyacetone phosphate (DHAP) to D-glyceraldehyde-3-phosphate (G3P).</text>
</comment>
<comment type="catalytic activity">
    <reaction evidence="1">
        <text>D-glyceraldehyde 3-phosphate = dihydroxyacetone phosphate</text>
        <dbReference type="Rhea" id="RHEA:18585"/>
        <dbReference type="ChEBI" id="CHEBI:57642"/>
        <dbReference type="ChEBI" id="CHEBI:59776"/>
        <dbReference type="EC" id="5.3.1.1"/>
    </reaction>
</comment>
<comment type="pathway">
    <text evidence="1">Carbohydrate biosynthesis; gluconeogenesis.</text>
</comment>
<comment type="pathway">
    <text evidence="1">Carbohydrate degradation; glycolysis; D-glyceraldehyde 3-phosphate from glycerone phosphate: step 1/1.</text>
</comment>
<comment type="subunit">
    <text evidence="1">Homodimer.</text>
</comment>
<comment type="subcellular location">
    <subcellularLocation>
        <location evidence="1">Cytoplasm</location>
    </subcellularLocation>
</comment>
<comment type="similarity">
    <text evidence="1">Belongs to the triosephosphate isomerase family.</text>
</comment>
<name>TPIS_PHOV8</name>